<evidence type="ECO:0000255" key="1">
    <source>
        <dbReference type="HAMAP-Rule" id="MF_01491"/>
    </source>
</evidence>
<evidence type="ECO:0000269" key="2">
    <source>
    </source>
</evidence>
<sequence length="560" mass="61111">MTNISLKPNEVGVFAIGGLGEIGKNTYGIEYQDEIIIVDAGIKFPEDDLLGIDYVIPDYSYIVDNLDRVKALVITHGHEDHIGGIPFLLKQANIPIYAGPLALALIRGKLEEHGLWREATVYEINHNTELTFKNMSVTFFKTTHSIPEPVGIVIHTPQGKIICTGDFKFDFTPVGDPADLQRMAALGEEGVLCLLSDSTNAEIPTFTNSEKVVGQSILKIIEGIHGRIIFASFASNIYRLQQAAEAAVKTGRKIAVFGRSMEKAIVNGIELGYIKVPKGTFIEPSELKNLHASEVLIMCTGSQGESMAALARIANGTHRQVTLQPGDTVIFSSSPIPGNTTSVNKLINTIQEAGVDVIHGKVNNIHTSGHGGQQEQKLMLSLIKPKYFMPVHGEYRMQKIHAGLAMDIGIPKENIFIMENGDVLALTSDSARIAGHFNAQDIYVDGNGIGDIGAAVLRDRRDLSEDGVVLAVATVDFNTQMILAGPDILSRGFIYMRESGDLIRESQRVLFNAIRIALKNKDASIQSVNGAIVNALRPFLYEKTEREPIIIPMVLTPDKH</sequence>
<gene>
    <name evidence="1" type="primary">rnj1</name>
    <name type="ordered locus">SpyM3_1620</name>
</gene>
<proteinExistence type="evidence at protein level"/>
<accession>Q8K5W8</accession>
<accession>Q79YH0</accession>
<organism>
    <name type="scientific">Streptococcus pyogenes serotype M3 (strain ATCC BAA-595 / MGAS315)</name>
    <dbReference type="NCBI Taxonomy" id="198466"/>
    <lineage>
        <taxon>Bacteria</taxon>
        <taxon>Bacillati</taxon>
        <taxon>Bacillota</taxon>
        <taxon>Bacilli</taxon>
        <taxon>Lactobacillales</taxon>
        <taxon>Streptococcaceae</taxon>
        <taxon>Streptococcus</taxon>
    </lineage>
</organism>
<dbReference type="EC" id="3.1.-.-" evidence="1"/>
<dbReference type="EMBL" id="AE014074">
    <property type="protein sequence ID" value="AAM80227.1"/>
    <property type="molecule type" value="Genomic_DNA"/>
</dbReference>
<dbReference type="SMR" id="Q8K5W8"/>
<dbReference type="KEGG" id="spg:SpyM3_1620"/>
<dbReference type="HOGENOM" id="CLU_008727_3_1_9"/>
<dbReference type="BRENDA" id="4.6.1.22">
    <property type="organism ID" value="5935"/>
</dbReference>
<dbReference type="Proteomes" id="UP000000564">
    <property type="component" value="Chromosome"/>
</dbReference>
<dbReference type="GO" id="GO:0005737">
    <property type="term" value="C:cytoplasm"/>
    <property type="evidence" value="ECO:0007669"/>
    <property type="project" value="UniProtKB-SubCell"/>
</dbReference>
<dbReference type="GO" id="GO:0004534">
    <property type="term" value="F:5'-3' RNA exonuclease activity"/>
    <property type="evidence" value="ECO:0007669"/>
    <property type="project" value="UniProtKB-UniRule"/>
</dbReference>
<dbReference type="GO" id="GO:0003723">
    <property type="term" value="F:RNA binding"/>
    <property type="evidence" value="ECO:0007669"/>
    <property type="project" value="UniProtKB-UniRule"/>
</dbReference>
<dbReference type="GO" id="GO:0004521">
    <property type="term" value="F:RNA endonuclease activity"/>
    <property type="evidence" value="ECO:0007669"/>
    <property type="project" value="UniProtKB-UniRule"/>
</dbReference>
<dbReference type="GO" id="GO:0008270">
    <property type="term" value="F:zinc ion binding"/>
    <property type="evidence" value="ECO:0007669"/>
    <property type="project" value="InterPro"/>
</dbReference>
<dbReference type="GO" id="GO:0006397">
    <property type="term" value="P:mRNA processing"/>
    <property type="evidence" value="ECO:0007669"/>
    <property type="project" value="UniProtKB-KW"/>
</dbReference>
<dbReference type="GO" id="GO:0006364">
    <property type="term" value="P:rRNA processing"/>
    <property type="evidence" value="ECO:0007669"/>
    <property type="project" value="UniProtKB-UniRule"/>
</dbReference>
<dbReference type="CDD" id="cd07714">
    <property type="entry name" value="RNaseJ_MBL-fold"/>
    <property type="match status" value="1"/>
</dbReference>
<dbReference type="Gene3D" id="3.10.20.580">
    <property type="match status" value="1"/>
</dbReference>
<dbReference type="Gene3D" id="3.40.50.10710">
    <property type="entry name" value="Metallo-hydrolase/oxidoreductase"/>
    <property type="match status" value="1"/>
</dbReference>
<dbReference type="Gene3D" id="3.60.15.10">
    <property type="entry name" value="Ribonuclease Z/Hydroxyacylglutathione hydrolase-like"/>
    <property type="match status" value="1"/>
</dbReference>
<dbReference type="HAMAP" id="MF_01491">
    <property type="entry name" value="RNase_J_bact"/>
    <property type="match status" value="1"/>
</dbReference>
<dbReference type="InterPro" id="IPR001279">
    <property type="entry name" value="Metallo-B-lactamas"/>
</dbReference>
<dbReference type="InterPro" id="IPR036866">
    <property type="entry name" value="RibonucZ/Hydroxyglut_hydro"/>
</dbReference>
<dbReference type="InterPro" id="IPR011108">
    <property type="entry name" value="RMMBL"/>
</dbReference>
<dbReference type="InterPro" id="IPR004613">
    <property type="entry name" value="RNase_J"/>
</dbReference>
<dbReference type="InterPro" id="IPR042173">
    <property type="entry name" value="RNase_J_2"/>
</dbReference>
<dbReference type="InterPro" id="IPR055132">
    <property type="entry name" value="RNase_J_b_CASP"/>
</dbReference>
<dbReference type="InterPro" id="IPR030854">
    <property type="entry name" value="RNase_J_bac"/>
</dbReference>
<dbReference type="InterPro" id="IPR041636">
    <property type="entry name" value="RNase_J_C"/>
</dbReference>
<dbReference type="InterPro" id="IPR001587">
    <property type="entry name" value="RNase_J_CS"/>
</dbReference>
<dbReference type="NCBIfam" id="TIGR00649">
    <property type="entry name" value="MG423"/>
    <property type="match status" value="1"/>
</dbReference>
<dbReference type="NCBIfam" id="NF047419">
    <property type="entry name" value="RNase_J1_RnjA"/>
    <property type="match status" value="1"/>
</dbReference>
<dbReference type="PANTHER" id="PTHR43694">
    <property type="entry name" value="RIBONUCLEASE J"/>
    <property type="match status" value="1"/>
</dbReference>
<dbReference type="PANTHER" id="PTHR43694:SF1">
    <property type="entry name" value="RIBONUCLEASE J"/>
    <property type="match status" value="1"/>
</dbReference>
<dbReference type="Pfam" id="PF00753">
    <property type="entry name" value="Lactamase_B"/>
    <property type="match status" value="1"/>
</dbReference>
<dbReference type="Pfam" id="PF07521">
    <property type="entry name" value="RMMBL"/>
    <property type="match status" value="1"/>
</dbReference>
<dbReference type="Pfam" id="PF22505">
    <property type="entry name" value="RNase_J_b_CASP"/>
    <property type="match status" value="1"/>
</dbReference>
<dbReference type="Pfam" id="PF17770">
    <property type="entry name" value="RNase_J_C"/>
    <property type="match status" value="1"/>
</dbReference>
<dbReference type="PIRSF" id="PIRSF004803">
    <property type="entry name" value="RnjA"/>
    <property type="match status" value="1"/>
</dbReference>
<dbReference type="SMART" id="SM00849">
    <property type="entry name" value="Lactamase_B"/>
    <property type="match status" value="1"/>
</dbReference>
<dbReference type="SUPFAM" id="SSF56281">
    <property type="entry name" value="Metallo-hydrolase/oxidoreductase"/>
    <property type="match status" value="1"/>
</dbReference>
<dbReference type="PROSITE" id="PS01292">
    <property type="entry name" value="UPF0036"/>
    <property type="match status" value="1"/>
</dbReference>
<name>RNJ1_STRP3</name>
<keyword id="KW-0963">Cytoplasm</keyword>
<keyword id="KW-0255">Endonuclease</keyword>
<keyword id="KW-0269">Exonuclease</keyword>
<keyword id="KW-0378">Hydrolase</keyword>
<keyword id="KW-0479">Metal-binding</keyword>
<keyword id="KW-0507">mRNA processing</keyword>
<keyword id="KW-0540">Nuclease</keyword>
<keyword id="KW-0694">RNA-binding</keyword>
<keyword id="KW-0698">rRNA processing</keyword>
<keyword id="KW-0862">Zinc</keyword>
<feature type="chain" id="PRO_0000429573" description="Ribonuclease J 1">
    <location>
        <begin position="1"/>
        <end position="560"/>
    </location>
</feature>
<feature type="binding site" evidence="1">
    <location>
        <position position="76"/>
    </location>
    <ligand>
        <name>Zn(2+)</name>
        <dbReference type="ChEBI" id="CHEBI:29105"/>
        <label>1</label>
        <note>catalytic</note>
    </ligand>
</feature>
<feature type="binding site" evidence="1">
    <location>
        <position position="78"/>
    </location>
    <ligand>
        <name>Zn(2+)</name>
        <dbReference type="ChEBI" id="CHEBI:29105"/>
        <label>1</label>
        <note>catalytic</note>
    </ligand>
</feature>
<feature type="binding site" evidence="1">
    <location>
        <position position="80"/>
    </location>
    <ligand>
        <name>Zn(2+)</name>
        <dbReference type="ChEBI" id="CHEBI:29105"/>
        <label>2</label>
        <note>catalytic</note>
    </ligand>
</feature>
<feature type="binding site" evidence="1">
    <location>
        <position position="81"/>
    </location>
    <ligand>
        <name>Zn(2+)</name>
        <dbReference type="ChEBI" id="CHEBI:29105"/>
        <label>2</label>
        <note>catalytic</note>
    </ligand>
</feature>
<feature type="binding site" evidence="1">
    <location>
        <position position="144"/>
    </location>
    <ligand>
        <name>Zn(2+)</name>
        <dbReference type="ChEBI" id="CHEBI:29105"/>
        <label>1</label>
        <note>catalytic</note>
    </ligand>
</feature>
<feature type="binding site" evidence="1">
    <location>
        <position position="166"/>
    </location>
    <ligand>
        <name>Zn(2+)</name>
        <dbReference type="ChEBI" id="CHEBI:29105"/>
        <label>1</label>
        <note>catalytic</note>
    </ligand>
</feature>
<feature type="binding site" evidence="1">
    <location>
        <position position="166"/>
    </location>
    <ligand>
        <name>Zn(2+)</name>
        <dbReference type="ChEBI" id="CHEBI:29105"/>
        <label>2</label>
        <note>catalytic</note>
    </ligand>
</feature>
<feature type="binding site" evidence="1">
    <location>
        <begin position="366"/>
        <end position="370"/>
    </location>
    <ligand>
        <name>substrate</name>
    </ligand>
</feature>
<feature type="binding site" evidence="1">
    <location>
        <position position="392"/>
    </location>
    <ligand>
        <name>Zn(2+)</name>
        <dbReference type="ChEBI" id="CHEBI:29105"/>
        <label>2</label>
        <note>catalytic</note>
    </ligand>
</feature>
<comment type="function">
    <text evidence="1 2">An RNase that has 5'-3' exonuclease and possibly endonuclease activity. Involved in maturation of rRNA and in some organisms also mRNA maturation and/or decay (By similarity). Has an overlapping but not completely redundant role with RNase J2 in the decay of mRNA.</text>
</comment>
<comment type="cofactor">
    <cofactor evidence="1">
        <name>Zn(2+)</name>
        <dbReference type="ChEBI" id="CHEBI:29105"/>
    </cofactor>
    <text evidence="1">Binds up to 2 Zn(2+) ions per subunit. It is not clear if Zn(2+) or Mg(2+) is physiologically important.</text>
</comment>
<comment type="subunit">
    <text evidence="1">Homodimer, may be a subunit of the RNA degradosome.</text>
</comment>
<comment type="subcellular location">
    <subcellularLocation>
        <location evidence="1">Cytoplasm</location>
    </subcellularLocation>
</comment>
<comment type="induction">
    <text evidence="2">Expressed in cells (at protein level). Probably a monocistronic operon.</text>
</comment>
<comment type="disruption phenotype">
    <text evidence="2">Essential, it cannot be disrupted. Depletion experiments show it is involved in, and may be rate-limiting for decay of Class I mRNAs (they decay rapidly in exponential phase, are difficult to detect in stationary phase). May be required for initiation of decay of Class II mRNAs (more abundant in stationary than exponential phase, show biphasic decay kinetics).</text>
</comment>
<comment type="similarity">
    <text evidence="1">Belongs to the metallo-beta-lactamase superfamily. RNA-metabolizing metallo-beta-lactamase-like family. Bacterial RNase J subfamily.</text>
</comment>
<reference key="1">
    <citation type="journal article" date="2002" name="Proc. Natl. Acad. Sci. U.S.A.">
        <title>Genome sequence of a serotype M3 strain of group A Streptococcus: phage-encoded toxins, the high-virulence phenotype, and clone emergence.</title>
        <authorList>
            <person name="Beres S.B."/>
            <person name="Sylva G.L."/>
            <person name="Barbian K.D."/>
            <person name="Lei B."/>
            <person name="Hoff J.S."/>
            <person name="Mammarella N.D."/>
            <person name="Liu M.-Y."/>
            <person name="Smoot J.C."/>
            <person name="Porcella S.F."/>
            <person name="Parkins L.D."/>
            <person name="Campbell D.S."/>
            <person name="Smith T.M."/>
            <person name="McCormick J.K."/>
            <person name="Leung D.Y.M."/>
            <person name="Schlievert P.M."/>
            <person name="Musser J.M."/>
        </authorList>
    </citation>
    <scope>NUCLEOTIDE SEQUENCE [LARGE SCALE GENOMIC DNA]</scope>
    <source>
        <strain>ATCC BAA-595 / MGAS315</strain>
    </source>
</reference>
<reference key="2">
    <citation type="journal article" date="2010" name="Mol. Microbiol.">
        <title>The ribonucleases J1 and J2 are essential for growth and have independent roles in mRNA decay in Streptococcus pyogenes.</title>
        <authorList>
            <person name="Bugrysheva J.V."/>
            <person name="Scott J.R."/>
        </authorList>
    </citation>
    <scope>FUNCTION</scope>
    <scope>INDUCTION</scope>
    <scope>OPERON STRUCTURE</scope>
    <scope>DISRUPTION PHENOTYPE</scope>
    <source>
        <strain>ATCC BAA-595 / MGAS315</strain>
    </source>
</reference>
<protein>
    <recommendedName>
        <fullName evidence="1">Ribonuclease J 1</fullName>
        <shortName evidence="1">RNase J 1</shortName>
        <ecNumber evidence="1">3.1.-.-</ecNumber>
    </recommendedName>
</protein>